<organism>
    <name type="scientific">Salmonella typhimurium (strain LT2 / SGSC1412 / ATCC 700720)</name>
    <dbReference type="NCBI Taxonomy" id="99287"/>
    <lineage>
        <taxon>Bacteria</taxon>
        <taxon>Pseudomonadati</taxon>
        <taxon>Pseudomonadota</taxon>
        <taxon>Gammaproteobacteria</taxon>
        <taxon>Enterobacterales</taxon>
        <taxon>Enterobacteriaceae</taxon>
        <taxon>Salmonella</taxon>
    </lineage>
</organism>
<evidence type="ECO:0000305" key="1"/>
<name>DBHB_SALTY</name>
<sequence length="90" mass="9240">MNKSQLIEKIAAGADISKAAAGRALDAIIASVTESLKEGDDVALVGFGTFAVKERAARTGRNPQTGKEITIAAAKVPSFRAGKALKDAVN</sequence>
<reference key="1">
    <citation type="journal article" date="1988" name="Nucleic Acids Res.">
        <title>Nucleotide sequence of the HU-1 gene of Salmonella typhimurium.</title>
        <authorList>
            <person name="Marsh M."/>
            <person name="Hillyard D.R."/>
        </authorList>
    </citation>
    <scope>NUCLEOTIDE SEQUENCE [GENOMIC DNA]</scope>
    <source>
        <strain>LT2</strain>
    </source>
</reference>
<reference key="2">
    <citation type="journal article" date="2001" name="Nature">
        <title>Complete genome sequence of Salmonella enterica serovar Typhimurium LT2.</title>
        <authorList>
            <person name="McClelland M."/>
            <person name="Sanderson K.E."/>
            <person name="Spieth J."/>
            <person name="Clifton S.W."/>
            <person name="Latreille P."/>
            <person name="Courtney L."/>
            <person name="Porwollik S."/>
            <person name="Ali J."/>
            <person name="Dante M."/>
            <person name="Du F."/>
            <person name="Hou S."/>
            <person name="Layman D."/>
            <person name="Leonard S."/>
            <person name="Nguyen C."/>
            <person name="Scott K."/>
            <person name="Holmes A."/>
            <person name="Grewal N."/>
            <person name="Mulvaney E."/>
            <person name="Ryan E."/>
            <person name="Sun H."/>
            <person name="Florea L."/>
            <person name="Miller W."/>
            <person name="Stoneking T."/>
            <person name="Nhan M."/>
            <person name="Waterston R."/>
            <person name="Wilson R.K."/>
        </authorList>
    </citation>
    <scope>NUCLEOTIDE SEQUENCE [LARGE SCALE GENOMIC DNA]</scope>
    <source>
        <strain>LT2 / SGSC1412 / ATCC 700720</strain>
    </source>
</reference>
<protein>
    <recommendedName>
        <fullName>DNA-binding protein HU-beta</fullName>
    </recommendedName>
    <alternativeName>
        <fullName>HU-1</fullName>
    </alternativeName>
    <alternativeName>
        <fullName>NS1</fullName>
    </alternativeName>
</protein>
<comment type="function">
    <text>Histone-like DNA-binding protein which is capable of wrapping DNA to stabilize it, and thus to prevent its denaturation under extreme environmental conditions.</text>
</comment>
<comment type="subunit">
    <text>Heterodimer of an alpha and a beta chain.</text>
</comment>
<comment type="similarity">
    <text evidence="1">Belongs to the bacterial histone-like protein family.</text>
</comment>
<feature type="chain" id="PRO_0000104971" description="DNA-binding protein HU-beta">
    <location>
        <begin position="1"/>
        <end position="90"/>
    </location>
</feature>
<proteinExistence type="inferred from homology"/>
<accession>P0A1R8</accession>
<accession>P05515</accession>
<dbReference type="EMBL" id="X07844">
    <property type="protein sequence ID" value="CAA30692.1"/>
    <property type="molecule type" value="Genomic_DNA"/>
</dbReference>
<dbReference type="EMBL" id="AE006468">
    <property type="protein sequence ID" value="AAL19406.1"/>
    <property type="molecule type" value="Genomic_DNA"/>
</dbReference>
<dbReference type="PIR" id="S01732">
    <property type="entry name" value="S01732"/>
</dbReference>
<dbReference type="RefSeq" id="NP_459447.1">
    <property type="nucleotide sequence ID" value="NC_003197.2"/>
</dbReference>
<dbReference type="RefSeq" id="WP_001043544.1">
    <property type="nucleotide sequence ID" value="NC_003197.2"/>
</dbReference>
<dbReference type="BMRB" id="P0A1R8"/>
<dbReference type="SMR" id="P0A1R8"/>
<dbReference type="STRING" id="99287.STM0451"/>
<dbReference type="PaxDb" id="99287-STM0451"/>
<dbReference type="GeneID" id="1251971"/>
<dbReference type="KEGG" id="stm:STM0451"/>
<dbReference type="PATRIC" id="fig|99287.12.peg.483"/>
<dbReference type="HOGENOM" id="CLU_105066_3_2_6"/>
<dbReference type="OMA" id="AFSAGKM"/>
<dbReference type="PhylomeDB" id="P0A1R8"/>
<dbReference type="BioCyc" id="SENT99287:STM0451-MONOMER"/>
<dbReference type="Proteomes" id="UP000001014">
    <property type="component" value="Chromosome"/>
</dbReference>
<dbReference type="GO" id="GO:0005829">
    <property type="term" value="C:cytosol"/>
    <property type="evidence" value="ECO:0000318"/>
    <property type="project" value="GO_Central"/>
</dbReference>
<dbReference type="GO" id="GO:0003677">
    <property type="term" value="F:DNA binding"/>
    <property type="evidence" value="ECO:0000318"/>
    <property type="project" value="GO_Central"/>
</dbReference>
<dbReference type="GO" id="GO:0030527">
    <property type="term" value="F:structural constituent of chromatin"/>
    <property type="evidence" value="ECO:0007669"/>
    <property type="project" value="InterPro"/>
</dbReference>
<dbReference type="GO" id="GO:0030261">
    <property type="term" value="P:chromosome condensation"/>
    <property type="evidence" value="ECO:0007669"/>
    <property type="project" value="UniProtKB-KW"/>
</dbReference>
<dbReference type="CDD" id="cd13831">
    <property type="entry name" value="HU"/>
    <property type="match status" value="1"/>
</dbReference>
<dbReference type="FunFam" id="4.10.520.10:FF:000001">
    <property type="entry name" value="DNA-binding protein HU"/>
    <property type="match status" value="1"/>
</dbReference>
<dbReference type="Gene3D" id="4.10.520.10">
    <property type="entry name" value="IHF-like DNA-binding proteins"/>
    <property type="match status" value="1"/>
</dbReference>
<dbReference type="InterPro" id="IPR000119">
    <property type="entry name" value="Hist_DNA-bd"/>
</dbReference>
<dbReference type="InterPro" id="IPR020816">
    <property type="entry name" value="Histone-like_DNA-bd_CS"/>
</dbReference>
<dbReference type="InterPro" id="IPR010992">
    <property type="entry name" value="IHF-like_DNA-bd_dom_sf"/>
</dbReference>
<dbReference type="NCBIfam" id="NF007945">
    <property type="entry name" value="PRK10664.1"/>
    <property type="match status" value="1"/>
</dbReference>
<dbReference type="PANTHER" id="PTHR33175">
    <property type="entry name" value="DNA-BINDING PROTEIN HU"/>
    <property type="match status" value="1"/>
</dbReference>
<dbReference type="PANTHER" id="PTHR33175:SF3">
    <property type="entry name" value="DNA-BINDING PROTEIN HU-BETA"/>
    <property type="match status" value="1"/>
</dbReference>
<dbReference type="Pfam" id="PF00216">
    <property type="entry name" value="Bac_DNA_binding"/>
    <property type="match status" value="1"/>
</dbReference>
<dbReference type="PRINTS" id="PR01727">
    <property type="entry name" value="DNABINDINGHU"/>
</dbReference>
<dbReference type="SMART" id="SM00411">
    <property type="entry name" value="BHL"/>
    <property type="match status" value="1"/>
</dbReference>
<dbReference type="SUPFAM" id="SSF47729">
    <property type="entry name" value="IHF-like DNA-binding proteins"/>
    <property type="match status" value="1"/>
</dbReference>
<dbReference type="PROSITE" id="PS00045">
    <property type="entry name" value="HISTONE_LIKE"/>
    <property type="match status" value="1"/>
</dbReference>
<keyword id="KW-0226">DNA condensation</keyword>
<keyword id="KW-0238">DNA-binding</keyword>
<keyword id="KW-1185">Reference proteome</keyword>
<gene>
    <name type="primary">hupB</name>
    <name type="ordered locus">STM0451</name>
</gene>